<organism>
    <name type="scientific">Musicola paradisiaca (strain Ech703)</name>
    <name type="common">Dickeya paradisiaca</name>
    <name type="synonym">Dickeya dadantii</name>
    <dbReference type="NCBI Taxonomy" id="579405"/>
    <lineage>
        <taxon>Bacteria</taxon>
        <taxon>Pseudomonadati</taxon>
        <taxon>Pseudomonadota</taxon>
        <taxon>Gammaproteobacteria</taxon>
        <taxon>Enterobacterales</taxon>
        <taxon>Pectobacteriaceae</taxon>
        <taxon>Musicola</taxon>
    </lineage>
</organism>
<dbReference type="EC" id="2.1.1.223" evidence="1"/>
<dbReference type="EMBL" id="CP001654">
    <property type="protein sequence ID" value="ACS86570.1"/>
    <property type="molecule type" value="Genomic_DNA"/>
</dbReference>
<dbReference type="RefSeq" id="WP_015854475.1">
    <property type="nucleotide sequence ID" value="NC_012880.1"/>
</dbReference>
<dbReference type="SMR" id="C6CB42"/>
<dbReference type="STRING" id="579405.Dd703_2793"/>
<dbReference type="KEGG" id="dda:Dd703_2793"/>
<dbReference type="eggNOG" id="COG4123">
    <property type="taxonomic scope" value="Bacteria"/>
</dbReference>
<dbReference type="HOGENOM" id="CLU_061983_0_0_6"/>
<dbReference type="Proteomes" id="UP000002734">
    <property type="component" value="Chromosome"/>
</dbReference>
<dbReference type="GO" id="GO:0005737">
    <property type="term" value="C:cytoplasm"/>
    <property type="evidence" value="ECO:0007669"/>
    <property type="project" value="UniProtKB-SubCell"/>
</dbReference>
<dbReference type="GO" id="GO:0003676">
    <property type="term" value="F:nucleic acid binding"/>
    <property type="evidence" value="ECO:0007669"/>
    <property type="project" value="InterPro"/>
</dbReference>
<dbReference type="GO" id="GO:0016430">
    <property type="term" value="F:tRNA (adenine-N6)-methyltransferase activity"/>
    <property type="evidence" value="ECO:0007669"/>
    <property type="project" value="UniProtKB-UniRule"/>
</dbReference>
<dbReference type="GO" id="GO:0032259">
    <property type="term" value="P:methylation"/>
    <property type="evidence" value="ECO:0007669"/>
    <property type="project" value="UniProtKB-KW"/>
</dbReference>
<dbReference type="GO" id="GO:0008033">
    <property type="term" value="P:tRNA processing"/>
    <property type="evidence" value="ECO:0007669"/>
    <property type="project" value="UniProtKB-UniRule"/>
</dbReference>
<dbReference type="CDD" id="cd02440">
    <property type="entry name" value="AdoMet_MTases"/>
    <property type="match status" value="1"/>
</dbReference>
<dbReference type="Gene3D" id="3.40.50.150">
    <property type="entry name" value="Vaccinia Virus protein VP39"/>
    <property type="match status" value="1"/>
</dbReference>
<dbReference type="HAMAP" id="MF_01872">
    <property type="entry name" value="tRNA_methyltr_YfiC"/>
    <property type="match status" value="1"/>
</dbReference>
<dbReference type="InterPro" id="IPR002052">
    <property type="entry name" value="DNA_methylase_N6_adenine_CS"/>
</dbReference>
<dbReference type="InterPro" id="IPR029063">
    <property type="entry name" value="SAM-dependent_MTases_sf"/>
</dbReference>
<dbReference type="InterPro" id="IPR007848">
    <property type="entry name" value="Small_mtfrase_dom"/>
</dbReference>
<dbReference type="InterPro" id="IPR050210">
    <property type="entry name" value="tRNA_Adenine-N(6)_MTase"/>
</dbReference>
<dbReference type="InterPro" id="IPR022882">
    <property type="entry name" value="tRNA_adenine-N6_MeTrfase"/>
</dbReference>
<dbReference type="NCBIfam" id="NF047853">
    <property type="entry name" value="tRm6a37MtseTrmN"/>
    <property type="match status" value="1"/>
</dbReference>
<dbReference type="PANTHER" id="PTHR47739">
    <property type="entry name" value="TRNA1(VAL) (ADENINE(37)-N6)-METHYLTRANSFERASE"/>
    <property type="match status" value="1"/>
</dbReference>
<dbReference type="PANTHER" id="PTHR47739:SF1">
    <property type="entry name" value="TRNA1(VAL) (ADENINE(37)-N6)-METHYLTRANSFERASE"/>
    <property type="match status" value="1"/>
</dbReference>
<dbReference type="Pfam" id="PF05175">
    <property type="entry name" value="MTS"/>
    <property type="match status" value="1"/>
</dbReference>
<dbReference type="SUPFAM" id="SSF53335">
    <property type="entry name" value="S-adenosyl-L-methionine-dependent methyltransferases"/>
    <property type="match status" value="1"/>
</dbReference>
<dbReference type="PROSITE" id="PS00092">
    <property type="entry name" value="N6_MTASE"/>
    <property type="match status" value="1"/>
</dbReference>
<comment type="function">
    <text evidence="1">Specifically methylates the adenine in position 37 of tRNA(1)(Val) (anticodon cmo5UAC).</text>
</comment>
<comment type="catalytic activity">
    <reaction evidence="1">
        <text>adenosine(37) in tRNA1(Val) + S-adenosyl-L-methionine = N(6)-methyladenosine(37) in tRNA1(Val) + S-adenosyl-L-homocysteine + H(+)</text>
        <dbReference type="Rhea" id="RHEA:43160"/>
        <dbReference type="Rhea" id="RHEA-COMP:10369"/>
        <dbReference type="Rhea" id="RHEA-COMP:10370"/>
        <dbReference type="ChEBI" id="CHEBI:15378"/>
        <dbReference type="ChEBI" id="CHEBI:57856"/>
        <dbReference type="ChEBI" id="CHEBI:59789"/>
        <dbReference type="ChEBI" id="CHEBI:74411"/>
        <dbReference type="ChEBI" id="CHEBI:74449"/>
        <dbReference type="EC" id="2.1.1.223"/>
    </reaction>
</comment>
<comment type="subcellular location">
    <subcellularLocation>
        <location evidence="1">Cytoplasm</location>
    </subcellularLocation>
</comment>
<comment type="similarity">
    <text evidence="1">Belongs to the methyltransferase superfamily. tRNA (adenine-N(6)-)-methyltransferase family.</text>
</comment>
<accession>C6CB42</accession>
<protein>
    <recommendedName>
        <fullName evidence="1">tRNA1(Val) (adenine(37)-N6)-methyltransferase</fullName>
        <ecNumber evidence="1">2.1.1.223</ecNumber>
    </recommendedName>
    <alternativeName>
        <fullName evidence="1">tRNA m6A37 methyltransferase</fullName>
    </alternativeName>
</protein>
<name>TRMN6_MUSP7</name>
<reference key="1">
    <citation type="submission" date="2009-06" db="EMBL/GenBank/DDBJ databases">
        <title>Complete sequence of Dickeya dadantii Ech703.</title>
        <authorList>
            <consortium name="US DOE Joint Genome Institute"/>
            <person name="Lucas S."/>
            <person name="Copeland A."/>
            <person name="Lapidus A."/>
            <person name="Glavina del Rio T."/>
            <person name="Dalin E."/>
            <person name="Tice H."/>
            <person name="Bruce D."/>
            <person name="Goodwin L."/>
            <person name="Pitluck S."/>
            <person name="Chertkov O."/>
            <person name="Brettin T."/>
            <person name="Detter J.C."/>
            <person name="Han C."/>
            <person name="Larimer F."/>
            <person name="Land M."/>
            <person name="Hauser L."/>
            <person name="Kyrpides N."/>
            <person name="Mikhailova N."/>
            <person name="Balakrishnan V."/>
            <person name="Glasner J."/>
            <person name="Perna N.T."/>
        </authorList>
    </citation>
    <scope>NUCLEOTIDE SEQUENCE [LARGE SCALE GENOMIC DNA]</scope>
    <source>
        <strain>Ech703</strain>
    </source>
</reference>
<sequence>MSARQHTPDLRADGFTFKRFFIAHDRCAMKVGTDGILLGAWAPLRHESRILDVGCGSALISLMLAQRCEGRVPVDAVELDIAASVQAAENVAASPWRDTVVVHQADIVEFSCTTPHRYSLVVSNPPYFAAGVACASPQRTQARYTSSLSHEALLHSVSAVLMPEGRFCVVLPSQIVGDFLFLAESLQWHLALRVDVADNPRRPVHRVLLALTQAPIDPVYSSALLIRDELQQYSPDYRALTQDFYLSM</sequence>
<evidence type="ECO:0000255" key="1">
    <source>
        <dbReference type="HAMAP-Rule" id="MF_01872"/>
    </source>
</evidence>
<feature type="chain" id="PRO_0000387347" description="tRNA1(Val) (adenine(37)-N6)-methyltransferase">
    <location>
        <begin position="1"/>
        <end position="248"/>
    </location>
</feature>
<proteinExistence type="inferred from homology"/>
<gene>
    <name type="ordered locus">Dd703_2793</name>
</gene>
<keyword id="KW-0963">Cytoplasm</keyword>
<keyword id="KW-0489">Methyltransferase</keyword>
<keyword id="KW-0949">S-adenosyl-L-methionine</keyword>
<keyword id="KW-0808">Transferase</keyword>
<keyword id="KW-0819">tRNA processing</keyword>